<name>CNNM4_XENTR</name>
<accession>A0JPA0</accession>
<reference key="1">
    <citation type="submission" date="2006-11" db="EMBL/GenBank/DDBJ databases">
        <authorList>
            <consortium name="NIH - Xenopus Gene Collection (XGC) project"/>
        </authorList>
    </citation>
    <scope>NUCLEOTIDE SEQUENCE [LARGE SCALE MRNA]</scope>
    <source>
        <tissue>Testis</tissue>
    </source>
</reference>
<protein>
    <recommendedName>
        <fullName>Metal transporter CNNM4</fullName>
    </recommendedName>
    <alternativeName>
        <fullName>Ancient conserved domain-containing protein 4</fullName>
    </alternativeName>
    <alternativeName>
        <fullName>Cyclin-M4</fullName>
    </alternativeName>
</protein>
<feature type="chain" id="PRO_0000295768" description="Metal transporter CNNM4">
    <location>
        <begin position="1"/>
        <end position="769"/>
    </location>
</feature>
<feature type="topological domain" description="Extracellular" evidence="2">
    <location>
        <begin position="1"/>
        <end position="175"/>
    </location>
</feature>
<feature type="transmembrane region" description="Helical" evidence="2">
    <location>
        <begin position="176"/>
        <end position="196"/>
    </location>
</feature>
<feature type="topological domain" description="Cytoplasmic" evidence="2">
    <location>
        <begin position="197"/>
        <end position="237"/>
    </location>
</feature>
<feature type="intramembrane region" description="Helical" evidence="2">
    <location>
        <begin position="238"/>
        <end position="258"/>
    </location>
</feature>
<feature type="topological domain" description="Cytoplasmic" evidence="2">
    <location>
        <begin position="259"/>
        <end position="261"/>
    </location>
</feature>
<feature type="transmembrane region" description="Helical" evidence="2">
    <location>
        <begin position="262"/>
        <end position="282"/>
    </location>
</feature>
<feature type="topological domain" description="Extracellular" evidence="2">
    <location>
        <begin position="283"/>
        <end position="292"/>
    </location>
</feature>
<feature type="transmembrane region" description="Helical" evidence="2">
    <location>
        <begin position="293"/>
        <end position="313"/>
    </location>
</feature>
<feature type="topological domain" description="Cytoplasmic" evidence="2">
    <location>
        <begin position="314"/>
        <end position="769"/>
    </location>
</feature>
<feature type="domain" description="CNNM transmembrane" evidence="4">
    <location>
        <begin position="175"/>
        <end position="355"/>
    </location>
</feature>
<feature type="domain" description="CBS 1" evidence="3">
    <location>
        <begin position="374"/>
        <end position="435"/>
    </location>
</feature>
<feature type="domain" description="CBS 2" evidence="3">
    <location>
        <begin position="442"/>
        <end position="508"/>
    </location>
</feature>
<feature type="region of interest" description="Disordered" evidence="5">
    <location>
        <begin position="717"/>
        <end position="769"/>
    </location>
</feature>
<feature type="compositionally biased region" description="Polar residues" evidence="5">
    <location>
        <begin position="721"/>
        <end position="730"/>
    </location>
</feature>
<feature type="compositionally biased region" description="Basic and acidic residues" evidence="5">
    <location>
        <begin position="732"/>
        <end position="746"/>
    </location>
</feature>
<feature type="compositionally biased region" description="Polar residues" evidence="5">
    <location>
        <begin position="752"/>
        <end position="769"/>
    </location>
</feature>
<feature type="glycosylation site" description="N-linked (GlcNAc...) asparagine" evidence="2">
    <location>
        <position position="99"/>
    </location>
</feature>
<feature type="glycosylation site" description="N-linked (GlcNAc...) asparagine" evidence="2">
    <location>
        <position position="115"/>
    </location>
</feature>
<gene>
    <name type="primary">cnnm4</name>
    <name type="synonym">acdp4</name>
</gene>
<comment type="function">
    <text evidence="1">Probable metal transporter.</text>
</comment>
<comment type="subcellular location">
    <subcellularLocation>
        <location evidence="1">Cell membrane</location>
        <topology evidence="1">Multi-pass membrane protein</topology>
    </subcellularLocation>
</comment>
<comment type="miscellaneous">
    <text>Shares weak sequence similarity with the cyclin family, hence its name. However, it has no cyclin-like function in vivo.</text>
</comment>
<comment type="similarity">
    <text evidence="6">Belongs to the ACDP family.</text>
</comment>
<dbReference type="EMBL" id="BC127319">
    <property type="protein sequence ID" value="AAI27320.1"/>
    <property type="molecule type" value="mRNA"/>
</dbReference>
<dbReference type="RefSeq" id="NP_001090672.1">
    <property type="nucleotide sequence ID" value="NM_001097203.1"/>
</dbReference>
<dbReference type="SMR" id="A0JPA0"/>
<dbReference type="FunCoup" id="A0JPA0">
    <property type="interactions" value="238"/>
</dbReference>
<dbReference type="STRING" id="8364.ENSXETP00000012822"/>
<dbReference type="GlyCosmos" id="A0JPA0">
    <property type="glycosylation" value="2 sites, No reported glycans"/>
</dbReference>
<dbReference type="PaxDb" id="8364-ENSXETP00000002693"/>
<dbReference type="DNASU" id="100036645"/>
<dbReference type="GeneID" id="100036645"/>
<dbReference type="KEGG" id="xtr:100036645"/>
<dbReference type="AGR" id="Xenbase:XB-GENE-999369"/>
<dbReference type="CTD" id="26504"/>
<dbReference type="Xenbase" id="XB-GENE-999369">
    <property type="gene designation" value="cnnm4"/>
</dbReference>
<dbReference type="eggNOG" id="KOG2118">
    <property type="taxonomic scope" value="Eukaryota"/>
</dbReference>
<dbReference type="HOGENOM" id="CLU_011310_1_1_1"/>
<dbReference type="InParanoid" id="A0JPA0"/>
<dbReference type="OMA" id="VYMRVHR"/>
<dbReference type="OrthoDB" id="5353557at2759"/>
<dbReference type="PhylomeDB" id="A0JPA0"/>
<dbReference type="TreeFam" id="TF101012"/>
<dbReference type="Proteomes" id="UP000008143">
    <property type="component" value="Chromosome 3"/>
</dbReference>
<dbReference type="Bgee" id="ENSXETG00000001249">
    <property type="expression patterns" value="Expressed in 4-cell stage embryo and 13 other cell types or tissues"/>
</dbReference>
<dbReference type="GO" id="GO:0005886">
    <property type="term" value="C:plasma membrane"/>
    <property type="evidence" value="ECO:0007669"/>
    <property type="project" value="UniProtKB-SubCell"/>
</dbReference>
<dbReference type="GO" id="GO:0010960">
    <property type="term" value="P:magnesium ion homeostasis"/>
    <property type="evidence" value="ECO:0007669"/>
    <property type="project" value="InterPro"/>
</dbReference>
<dbReference type="GO" id="GO:0006811">
    <property type="term" value="P:monoatomic ion transport"/>
    <property type="evidence" value="ECO:0007669"/>
    <property type="project" value="UniProtKB-KW"/>
</dbReference>
<dbReference type="CDD" id="cd04590">
    <property type="entry name" value="CBS_pair_CorC_HlyC_assoc"/>
    <property type="match status" value="1"/>
</dbReference>
<dbReference type="FunFam" id="3.10.580.10:FF:000001">
    <property type="entry name" value="Putative metal transporter CNNM3 isoform 2"/>
    <property type="match status" value="1"/>
</dbReference>
<dbReference type="Gene3D" id="3.10.580.10">
    <property type="entry name" value="CBS-domain"/>
    <property type="match status" value="1"/>
</dbReference>
<dbReference type="InterPro" id="IPR045095">
    <property type="entry name" value="ACDP"/>
</dbReference>
<dbReference type="InterPro" id="IPR000644">
    <property type="entry name" value="CBS_dom"/>
</dbReference>
<dbReference type="InterPro" id="IPR046342">
    <property type="entry name" value="CBS_dom_sf"/>
</dbReference>
<dbReference type="InterPro" id="IPR002550">
    <property type="entry name" value="CNNM"/>
</dbReference>
<dbReference type="InterPro" id="IPR044751">
    <property type="entry name" value="Ion_transp-like_CBS"/>
</dbReference>
<dbReference type="PANTHER" id="PTHR12064">
    <property type="entry name" value="METAL TRANSPORTER CNNM"/>
    <property type="match status" value="1"/>
</dbReference>
<dbReference type="PANTHER" id="PTHR12064:SF26">
    <property type="entry name" value="METAL TRANSPORTER CNNM4"/>
    <property type="match status" value="1"/>
</dbReference>
<dbReference type="Pfam" id="PF00571">
    <property type="entry name" value="CBS"/>
    <property type="match status" value="1"/>
</dbReference>
<dbReference type="Pfam" id="PF01595">
    <property type="entry name" value="CNNM"/>
    <property type="match status" value="1"/>
</dbReference>
<dbReference type="Pfam" id="PF25511">
    <property type="entry name" value="Ig_CNNM4_N"/>
    <property type="match status" value="1"/>
</dbReference>
<dbReference type="SUPFAM" id="SSF54631">
    <property type="entry name" value="CBS-domain pair"/>
    <property type="match status" value="1"/>
</dbReference>
<dbReference type="PROSITE" id="PS51371">
    <property type="entry name" value="CBS"/>
    <property type="match status" value="2"/>
</dbReference>
<dbReference type="PROSITE" id="PS51846">
    <property type="entry name" value="CNNM"/>
    <property type="match status" value="1"/>
</dbReference>
<keyword id="KW-0129">CBS domain</keyword>
<keyword id="KW-1003">Cell membrane</keyword>
<keyword id="KW-0325">Glycoprotein</keyword>
<keyword id="KW-0406">Ion transport</keyword>
<keyword id="KW-0472">Membrane</keyword>
<keyword id="KW-1185">Reference proteome</keyword>
<keyword id="KW-0677">Repeat</keyword>
<keyword id="KW-0812">Transmembrane</keyword>
<keyword id="KW-1133">Transmembrane helix</keyword>
<keyword id="KW-0813">Transport</keyword>
<proteinExistence type="evidence at transcript level"/>
<organism>
    <name type="scientific">Xenopus tropicalis</name>
    <name type="common">Western clawed frog</name>
    <name type="synonym">Silurana tropicalis</name>
    <dbReference type="NCBI Taxonomy" id="8364"/>
    <lineage>
        <taxon>Eukaryota</taxon>
        <taxon>Metazoa</taxon>
        <taxon>Chordata</taxon>
        <taxon>Craniata</taxon>
        <taxon>Vertebrata</taxon>
        <taxon>Euteleostomi</taxon>
        <taxon>Amphibia</taxon>
        <taxon>Batrachia</taxon>
        <taxon>Anura</taxon>
        <taxon>Pipoidea</taxon>
        <taxon>Pipidae</taxon>
        <taxon>Xenopodinae</taxon>
        <taxon>Xenopus</taxon>
        <taxon>Silurana</taxon>
    </lineage>
</organism>
<evidence type="ECO:0000250" key="1"/>
<evidence type="ECO:0000255" key="2"/>
<evidence type="ECO:0000255" key="3">
    <source>
        <dbReference type="PROSITE-ProRule" id="PRU00703"/>
    </source>
</evidence>
<evidence type="ECO:0000255" key="4">
    <source>
        <dbReference type="PROSITE-ProRule" id="PRU01193"/>
    </source>
</evidence>
<evidence type="ECO:0000256" key="5">
    <source>
        <dbReference type="SAM" id="MobiDB-lite"/>
    </source>
</evidence>
<evidence type="ECO:0000305" key="6"/>
<sequence length="769" mass="85402">MAASAGCYYGVLGCALSLLLLPPLSRCAARTDSPLPEELPLILGFRLERSDRHAALSPDGELEVVEGSRLELRVYGLHLREDSGHILAFTEYSPGSQDNRSCLEDSRDLVLTRLNVSDDGFGAAGAAIVRLDVLPLRKSQSSRVYVLCTSRGPGLPWKLHTGPDGRLRVLEEEKPLLPIWLQACIIAVLLTLSGIFSGLNLGLMALDPMELRVVQRCGTEKEKRYASKIEPVRRKGNYLLCSLLLGNVLVNTTLTALLDELIGSGLAAVLASTTGIVVLGEIVPQALCSRHGLAVGANTLWLTRIFMLLTFPVAYPVSRLLDCALGQEIGTVYNREKLLEMLKVTEPYSGIVREEMNIIQGALELRTKTVEDVMTKVEDCFMLPSDAVLDFNTMSSIMESGYTRIPVYENERSNIVDILYVKDLAFVDPDDCTPLSTITRFYSHPLHFVFSDTKLDAVLEEFKKGKSHLAIVQKVNSEGEGDPFYEVMGLVTLEDVIEEIIKSEILDESDLYTDNRSKKRVKRRQDRKDFSVFKDADNELRVKISPQLLLAAHRFLSTEVPLFAPALVSEKTLLRLLKYPDVVQELHFNEDDKKASENFLYQRSKIADYFILILQGKVEVEAGKENMKFESGAFSYYGVMAINTPSAAELRSPSHMSSLNRSISLSCHERSDSISSTISGSNTQLSAQAQYMADFSVRALGDLQFVKITREQYQGALMSSRLDSSPQSPEGGTRKPDSTLSERSEVLEDETTSLLNQRNSQHSLQHNAV</sequence>